<dbReference type="EMBL" id="BC059581">
    <property type="protein sequence ID" value="AAH59581.1"/>
    <property type="molecule type" value="mRNA"/>
</dbReference>
<dbReference type="RefSeq" id="NP_998567.1">
    <property type="nucleotide sequence ID" value="NM_213402.1"/>
</dbReference>
<dbReference type="SMR" id="Q6PBU5"/>
<dbReference type="FunCoup" id="Q6PBU5">
    <property type="interactions" value="290"/>
</dbReference>
<dbReference type="STRING" id="7955.ENSDARP00000131713"/>
<dbReference type="PaxDb" id="7955-ENSDARP00000045883"/>
<dbReference type="GeneID" id="406711"/>
<dbReference type="KEGG" id="dre:406711"/>
<dbReference type="AGR" id="ZFIN:ZDB-GENE-040426-2733"/>
<dbReference type="CTD" id="406711"/>
<dbReference type="ZFIN" id="ZDB-GENE-040426-2733">
    <property type="gene designation" value="grtp1a"/>
</dbReference>
<dbReference type="eggNOG" id="KOG2058">
    <property type="taxonomic scope" value="Eukaryota"/>
</dbReference>
<dbReference type="InParanoid" id="Q6PBU5"/>
<dbReference type="OrthoDB" id="294251at2759"/>
<dbReference type="PhylomeDB" id="Q6PBU5"/>
<dbReference type="PRO" id="PR:Q6PBU5"/>
<dbReference type="Proteomes" id="UP000000437">
    <property type="component" value="Chromosome 1"/>
</dbReference>
<dbReference type="GO" id="GO:0005737">
    <property type="term" value="C:cytoplasm"/>
    <property type="evidence" value="ECO:0000318"/>
    <property type="project" value="GO_Central"/>
</dbReference>
<dbReference type="GO" id="GO:0005886">
    <property type="term" value="C:plasma membrane"/>
    <property type="evidence" value="ECO:0000318"/>
    <property type="project" value="GO_Central"/>
</dbReference>
<dbReference type="GO" id="GO:0005096">
    <property type="term" value="F:GTPase activator activity"/>
    <property type="evidence" value="ECO:0000318"/>
    <property type="project" value="GO_Central"/>
</dbReference>
<dbReference type="FunFam" id="1.10.8.270:FF:000027">
    <property type="entry name" value="Growth hormone regulated TBC protein 1"/>
    <property type="match status" value="1"/>
</dbReference>
<dbReference type="FunFam" id="1.10.472.80:FF:000029">
    <property type="entry name" value="Growth hormone-regulated TBC protein 1"/>
    <property type="match status" value="1"/>
</dbReference>
<dbReference type="Gene3D" id="1.10.8.270">
    <property type="entry name" value="putative rabgap domain of human tbc1 domain family member 14 like domains"/>
    <property type="match status" value="1"/>
</dbReference>
<dbReference type="Gene3D" id="1.10.472.80">
    <property type="entry name" value="Ypt/Rab-GAP domain of gyp1p, domain 3"/>
    <property type="match status" value="1"/>
</dbReference>
<dbReference type="InterPro" id="IPR000195">
    <property type="entry name" value="Rab-GAP-TBC_dom"/>
</dbReference>
<dbReference type="InterPro" id="IPR035969">
    <property type="entry name" value="Rab-GAP_TBC_sf"/>
</dbReference>
<dbReference type="InterPro" id="IPR050302">
    <property type="entry name" value="Rab_GAP_TBC_domain"/>
</dbReference>
<dbReference type="PANTHER" id="PTHR47219:SF10">
    <property type="entry name" value="GROWTH HORMONE-REGULATED TBC PROTEIN 1"/>
    <property type="match status" value="1"/>
</dbReference>
<dbReference type="PANTHER" id="PTHR47219">
    <property type="entry name" value="RAB GTPASE-ACTIVATING PROTEIN 1-LIKE"/>
    <property type="match status" value="1"/>
</dbReference>
<dbReference type="Pfam" id="PF00566">
    <property type="entry name" value="RabGAP-TBC"/>
    <property type="match status" value="1"/>
</dbReference>
<dbReference type="SMART" id="SM00164">
    <property type="entry name" value="TBC"/>
    <property type="match status" value="1"/>
</dbReference>
<dbReference type="SUPFAM" id="SSF47923">
    <property type="entry name" value="Ypt/Rab-GAP domain of gyp1p"/>
    <property type="match status" value="2"/>
</dbReference>
<dbReference type="PROSITE" id="PS50086">
    <property type="entry name" value="TBC_RABGAP"/>
    <property type="match status" value="1"/>
</dbReference>
<gene>
    <name type="primary">grtp1a</name>
    <name type="synonym">grtp1</name>
</gene>
<accession>Q6PBU5</accession>
<reference key="1">
    <citation type="submission" date="2003-10" db="EMBL/GenBank/DDBJ databases">
        <authorList>
            <consortium name="NIH - Zebrafish Gene Collection (ZGC) project"/>
        </authorList>
    </citation>
    <scope>NUCLEOTIDE SEQUENCE [LARGE SCALE MRNA]</scope>
    <source>
        <tissue>Retina</tissue>
    </source>
</reference>
<evidence type="ECO:0000255" key="1">
    <source>
        <dbReference type="PROSITE-ProRule" id="PRU00163"/>
    </source>
</evidence>
<evidence type="ECO:0000256" key="2">
    <source>
        <dbReference type="SAM" id="MobiDB-lite"/>
    </source>
</evidence>
<organism>
    <name type="scientific">Danio rerio</name>
    <name type="common">Zebrafish</name>
    <name type="synonym">Brachydanio rerio</name>
    <dbReference type="NCBI Taxonomy" id="7955"/>
    <lineage>
        <taxon>Eukaryota</taxon>
        <taxon>Metazoa</taxon>
        <taxon>Chordata</taxon>
        <taxon>Craniata</taxon>
        <taxon>Vertebrata</taxon>
        <taxon>Euteleostomi</taxon>
        <taxon>Actinopterygii</taxon>
        <taxon>Neopterygii</taxon>
        <taxon>Teleostei</taxon>
        <taxon>Ostariophysi</taxon>
        <taxon>Cypriniformes</taxon>
        <taxon>Danionidae</taxon>
        <taxon>Danioninae</taxon>
        <taxon>Danio</taxon>
    </lineage>
</organism>
<name>GRT1A_DANRE</name>
<keyword id="KW-0343">GTPase activation</keyword>
<keyword id="KW-1185">Reference proteome</keyword>
<sequence>MEERDRTGRTGQPQHRINQPSTARERANSVDAYGFQRSDDFDYETHEQLMSEYLAVLTRRSIRWAKLLQGRRRVDRNLKVKRYVRKGVPNEHRPLVWMVCSGAQEQMDRNPGYYQSLLDTHHEPKLEESIRTDLHRTFPDNIYFRKSAEPCLQQALYNVLVAYGHHNKAVGYCQGMNFIAGYLILVSKDEETSFWLMEALLSRILPDYYTPAMLGLKTDQEVLGELVRLKAPAVWKLMQDQGVMWTLVVSRWFICLFIDVLPVETVLRIWDCLFYEGSKILFRVALTLIRHHQQEIAEAQNLPDVCERFKRITRGAFVEDCHTFMQKIFQEPGSLSMATVSKLRESCRARIIADES</sequence>
<comment type="function">
    <text>May act as a GTPase-activating protein for Rab family protein(s).</text>
</comment>
<feature type="chain" id="PRO_0000288711" description="Growth hormone-regulated TBC protein 1-A">
    <location>
        <begin position="1"/>
        <end position="356"/>
    </location>
</feature>
<feature type="domain" description="Rab-GAP TBC" evidence="1">
    <location>
        <begin position="87"/>
        <end position="277"/>
    </location>
</feature>
<feature type="region of interest" description="Disordered" evidence="2">
    <location>
        <begin position="1"/>
        <end position="29"/>
    </location>
</feature>
<feature type="compositionally biased region" description="Polar residues" evidence="2">
    <location>
        <begin position="9"/>
        <end position="22"/>
    </location>
</feature>
<protein>
    <recommendedName>
        <fullName>Growth hormone-regulated TBC protein 1-A</fullName>
    </recommendedName>
</protein>
<proteinExistence type="evidence at transcript level"/>